<proteinExistence type="inferred from homology"/>
<gene>
    <name evidence="1" type="primary">hemC</name>
    <name type="ordered locus">Cag_1515</name>
</gene>
<feature type="chain" id="PRO_0000304226" description="Porphobilinogen deaminase">
    <location>
        <begin position="1"/>
        <end position="313"/>
    </location>
</feature>
<feature type="modified residue" description="S-(dipyrrolylmethanemethyl)cysteine" evidence="1">
    <location>
        <position position="241"/>
    </location>
</feature>
<dbReference type="EC" id="2.5.1.61" evidence="1"/>
<dbReference type="EMBL" id="CP000108">
    <property type="protein sequence ID" value="ABB28770.1"/>
    <property type="molecule type" value="Genomic_DNA"/>
</dbReference>
<dbReference type="SMR" id="Q3AQF5"/>
<dbReference type="STRING" id="340177.Cag_1515"/>
<dbReference type="KEGG" id="cch:Cag_1515"/>
<dbReference type="eggNOG" id="COG0181">
    <property type="taxonomic scope" value="Bacteria"/>
</dbReference>
<dbReference type="HOGENOM" id="CLU_019704_0_2_10"/>
<dbReference type="OrthoDB" id="9810298at2"/>
<dbReference type="UniPathway" id="UPA00251">
    <property type="reaction ID" value="UER00319"/>
</dbReference>
<dbReference type="UniPathway" id="UPA00668"/>
<dbReference type="GO" id="GO:0005737">
    <property type="term" value="C:cytoplasm"/>
    <property type="evidence" value="ECO:0007669"/>
    <property type="project" value="TreeGrafter"/>
</dbReference>
<dbReference type="GO" id="GO:0004418">
    <property type="term" value="F:hydroxymethylbilane synthase activity"/>
    <property type="evidence" value="ECO:0007669"/>
    <property type="project" value="UniProtKB-UniRule"/>
</dbReference>
<dbReference type="GO" id="GO:0015995">
    <property type="term" value="P:chlorophyll biosynthetic process"/>
    <property type="evidence" value="ECO:0007669"/>
    <property type="project" value="UniProtKB-UniPathway"/>
</dbReference>
<dbReference type="GO" id="GO:0006782">
    <property type="term" value="P:protoporphyrinogen IX biosynthetic process"/>
    <property type="evidence" value="ECO:0007669"/>
    <property type="project" value="UniProtKB-UniRule"/>
</dbReference>
<dbReference type="CDD" id="cd13646">
    <property type="entry name" value="PBP2_EcHMBS_like"/>
    <property type="match status" value="1"/>
</dbReference>
<dbReference type="FunFam" id="3.30.160.40:FF:000002">
    <property type="entry name" value="Porphobilinogen deaminase"/>
    <property type="match status" value="1"/>
</dbReference>
<dbReference type="FunFam" id="3.40.190.10:FF:000004">
    <property type="entry name" value="Porphobilinogen deaminase"/>
    <property type="match status" value="1"/>
</dbReference>
<dbReference type="FunFam" id="3.40.190.10:FF:000005">
    <property type="entry name" value="Porphobilinogen deaminase"/>
    <property type="match status" value="1"/>
</dbReference>
<dbReference type="Gene3D" id="3.40.190.10">
    <property type="entry name" value="Periplasmic binding protein-like II"/>
    <property type="match status" value="2"/>
</dbReference>
<dbReference type="Gene3D" id="3.30.160.40">
    <property type="entry name" value="Porphobilinogen deaminase, C-terminal domain"/>
    <property type="match status" value="1"/>
</dbReference>
<dbReference type="HAMAP" id="MF_00260">
    <property type="entry name" value="Porphobil_deam"/>
    <property type="match status" value="1"/>
</dbReference>
<dbReference type="InterPro" id="IPR000860">
    <property type="entry name" value="HemC"/>
</dbReference>
<dbReference type="InterPro" id="IPR022419">
    <property type="entry name" value="Porphobilin_deaminase_cofac_BS"/>
</dbReference>
<dbReference type="InterPro" id="IPR022417">
    <property type="entry name" value="Porphobilin_deaminase_N"/>
</dbReference>
<dbReference type="InterPro" id="IPR022418">
    <property type="entry name" value="Porphobilinogen_deaminase_C"/>
</dbReference>
<dbReference type="InterPro" id="IPR036803">
    <property type="entry name" value="Porphobilinogen_deaminase_C_sf"/>
</dbReference>
<dbReference type="NCBIfam" id="TIGR00212">
    <property type="entry name" value="hemC"/>
    <property type="match status" value="1"/>
</dbReference>
<dbReference type="PANTHER" id="PTHR11557">
    <property type="entry name" value="PORPHOBILINOGEN DEAMINASE"/>
    <property type="match status" value="1"/>
</dbReference>
<dbReference type="PANTHER" id="PTHR11557:SF0">
    <property type="entry name" value="PORPHOBILINOGEN DEAMINASE"/>
    <property type="match status" value="1"/>
</dbReference>
<dbReference type="Pfam" id="PF01379">
    <property type="entry name" value="Porphobil_deam"/>
    <property type="match status" value="1"/>
</dbReference>
<dbReference type="Pfam" id="PF03900">
    <property type="entry name" value="Porphobil_deamC"/>
    <property type="match status" value="1"/>
</dbReference>
<dbReference type="PIRSF" id="PIRSF001438">
    <property type="entry name" value="4pyrrol_synth_OHMeBilane_synth"/>
    <property type="match status" value="1"/>
</dbReference>
<dbReference type="PRINTS" id="PR00151">
    <property type="entry name" value="PORPHBDMNASE"/>
</dbReference>
<dbReference type="SUPFAM" id="SSF53850">
    <property type="entry name" value="Periplasmic binding protein-like II"/>
    <property type="match status" value="1"/>
</dbReference>
<dbReference type="SUPFAM" id="SSF54782">
    <property type="entry name" value="Porphobilinogen deaminase (hydroxymethylbilane synthase), C-terminal domain"/>
    <property type="match status" value="1"/>
</dbReference>
<dbReference type="PROSITE" id="PS00533">
    <property type="entry name" value="PORPHOBILINOGEN_DEAM"/>
    <property type="match status" value="1"/>
</dbReference>
<accession>Q3AQF5</accession>
<evidence type="ECO:0000255" key="1">
    <source>
        <dbReference type="HAMAP-Rule" id="MF_00260"/>
    </source>
</evidence>
<reference key="1">
    <citation type="submission" date="2005-08" db="EMBL/GenBank/DDBJ databases">
        <title>Complete sequence of Chlorobium chlorochromatii CaD3.</title>
        <authorList>
            <consortium name="US DOE Joint Genome Institute"/>
            <person name="Copeland A."/>
            <person name="Lucas S."/>
            <person name="Lapidus A."/>
            <person name="Barry K."/>
            <person name="Detter J.C."/>
            <person name="Glavina T."/>
            <person name="Hammon N."/>
            <person name="Israni S."/>
            <person name="Pitluck S."/>
            <person name="Bryant D."/>
            <person name="Schmutz J."/>
            <person name="Larimer F."/>
            <person name="Land M."/>
            <person name="Kyrpides N."/>
            <person name="Ivanova N."/>
            <person name="Richardson P."/>
        </authorList>
    </citation>
    <scope>NUCLEOTIDE SEQUENCE [LARGE SCALE GENOMIC DNA]</scope>
    <source>
        <strain>CaD3</strain>
    </source>
</reference>
<sequence length="313" mass="34640">MKKQLIIGTRSSPLALWQAEFTKAELSKHYPDMEITLKLVKTTGDVLLDSPLSKIGDMGLFTKDIEKHLLAREIDLAVHSLKDVPTSTPEGLIITSFTEREDTRDVIISKGGVKLKDLPPNARMATSSLRRMSQLLSVRPDLDIRDIRGNLNTRFQKFDDGEFDAMMLAYAGVYRLNFSDRISEILPHDMMLPAVGQGALGIETRVDDEQTREIVRILNHSTTEYCCRAERALLRHLQGGCQIPIGAYATFSNGTLKLLAFVGSVDGKTALRNEITKTGLTSPEQAEEAGIALAEELLKQGADAILSQIRKTC</sequence>
<keyword id="KW-0149">Chlorophyll biosynthesis</keyword>
<keyword id="KW-0627">Porphyrin biosynthesis</keyword>
<keyword id="KW-0808">Transferase</keyword>
<organism>
    <name type="scientific">Chlorobium chlorochromatii (strain CaD3)</name>
    <dbReference type="NCBI Taxonomy" id="340177"/>
    <lineage>
        <taxon>Bacteria</taxon>
        <taxon>Pseudomonadati</taxon>
        <taxon>Chlorobiota</taxon>
        <taxon>Chlorobiia</taxon>
        <taxon>Chlorobiales</taxon>
        <taxon>Chlorobiaceae</taxon>
        <taxon>Chlorobium/Pelodictyon group</taxon>
        <taxon>Chlorobium</taxon>
    </lineage>
</organism>
<comment type="function">
    <text evidence="1">Tetrapolymerization of the monopyrrole PBG into the hydroxymethylbilane pre-uroporphyrinogen in several discrete steps.</text>
</comment>
<comment type="catalytic activity">
    <reaction evidence="1">
        <text>4 porphobilinogen + H2O = hydroxymethylbilane + 4 NH4(+)</text>
        <dbReference type="Rhea" id="RHEA:13185"/>
        <dbReference type="ChEBI" id="CHEBI:15377"/>
        <dbReference type="ChEBI" id="CHEBI:28938"/>
        <dbReference type="ChEBI" id="CHEBI:57845"/>
        <dbReference type="ChEBI" id="CHEBI:58126"/>
        <dbReference type="EC" id="2.5.1.61"/>
    </reaction>
</comment>
<comment type="cofactor">
    <cofactor evidence="1">
        <name>dipyrromethane</name>
        <dbReference type="ChEBI" id="CHEBI:60342"/>
    </cofactor>
    <text evidence="1">Binds 1 dipyrromethane group covalently.</text>
</comment>
<comment type="pathway">
    <text evidence="1">Porphyrin-containing compound metabolism; protoporphyrin-IX biosynthesis; coproporphyrinogen-III from 5-aminolevulinate: step 2/4.</text>
</comment>
<comment type="pathway">
    <text evidence="1">Porphyrin-containing compound metabolism; chlorophyll biosynthesis.</text>
</comment>
<comment type="subunit">
    <text evidence="1">Monomer.</text>
</comment>
<comment type="miscellaneous">
    <text evidence="1">The porphobilinogen subunits are added to the dipyrromethane group.</text>
</comment>
<comment type="similarity">
    <text evidence="1">Belongs to the HMBS family.</text>
</comment>
<name>HEM3_CHLCH</name>
<protein>
    <recommendedName>
        <fullName evidence="1">Porphobilinogen deaminase</fullName>
        <shortName evidence="1">PBG</shortName>
        <ecNumber evidence="1">2.5.1.61</ecNumber>
    </recommendedName>
    <alternativeName>
        <fullName evidence="1">Hydroxymethylbilane synthase</fullName>
        <shortName evidence="1">HMBS</shortName>
    </alternativeName>
    <alternativeName>
        <fullName evidence="1">Pre-uroporphyrinogen synthase</fullName>
    </alternativeName>
</protein>